<evidence type="ECO:0000255" key="1">
    <source>
        <dbReference type="HAMAP-Rule" id="MF_00328"/>
    </source>
</evidence>
<dbReference type="EC" id="2.7.4.8" evidence="1"/>
<dbReference type="EMBL" id="CP000003">
    <property type="protein sequence ID" value="AAT87522.1"/>
    <property type="molecule type" value="Genomic_DNA"/>
</dbReference>
<dbReference type="RefSeq" id="WP_002983649.1">
    <property type="nucleotide sequence ID" value="NC_006086.1"/>
</dbReference>
<dbReference type="SMR" id="Q5XAP1"/>
<dbReference type="GeneID" id="69900497"/>
<dbReference type="KEGG" id="spa:M6_Spy1387"/>
<dbReference type="HOGENOM" id="CLU_001715_1_2_9"/>
<dbReference type="Proteomes" id="UP000001167">
    <property type="component" value="Chromosome"/>
</dbReference>
<dbReference type="GO" id="GO:0005829">
    <property type="term" value="C:cytosol"/>
    <property type="evidence" value="ECO:0007669"/>
    <property type="project" value="TreeGrafter"/>
</dbReference>
<dbReference type="GO" id="GO:0005524">
    <property type="term" value="F:ATP binding"/>
    <property type="evidence" value="ECO:0007669"/>
    <property type="project" value="UniProtKB-UniRule"/>
</dbReference>
<dbReference type="GO" id="GO:0004385">
    <property type="term" value="F:guanylate kinase activity"/>
    <property type="evidence" value="ECO:0007669"/>
    <property type="project" value="UniProtKB-UniRule"/>
</dbReference>
<dbReference type="CDD" id="cd00071">
    <property type="entry name" value="GMPK"/>
    <property type="match status" value="1"/>
</dbReference>
<dbReference type="FunFam" id="3.40.50.300:FF:000855">
    <property type="entry name" value="Guanylate kinase"/>
    <property type="match status" value="1"/>
</dbReference>
<dbReference type="FunFam" id="3.30.63.10:FF:000002">
    <property type="entry name" value="Guanylate kinase 1"/>
    <property type="match status" value="1"/>
</dbReference>
<dbReference type="Gene3D" id="3.30.63.10">
    <property type="entry name" value="Guanylate Kinase phosphate binding domain"/>
    <property type="match status" value="1"/>
</dbReference>
<dbReference type="Gene3D" id="3.40.50.300">
    <property type="entry name" value="P-loop containing nucleotide triphosphate hydrolases"/>
    <property type="match status" value="2"/>
</dbReference>
<dbReference type="HAMAP" id="MF_00328">
    <property type="entry name" value="Guanylate_kinase"/>
    <property type="match status" value="1"/>
</dbReference>
<dbReference type="InterPro" id="IPR008145">
    <property type="entry name" value="GK/Ca_channel_bsu"/>
</dbReference>
<dbReference type="InterPro" id="IPR008144">
    <property type="entry name" value="Guanylate_kin-like_dom"/>
</dbReference>
<dbReference type="InterPro" id="IPR017665">
    <property type="entry name" value="Guanylate_kinase"/>
</dbReference>
<dbReference type="InterPro" id="IPR020590">
    <property type="entry name" value="Guanylate_kinase_CS"/>
</dbReference>
<dbReference type="InterPro" id="IPR027417">
    <property type="entry name" value="P-loop_NTPase"/>
</dbReference>
<dbReference type="NCBIfam" id="TIGR03263">
    <property type="entry name" value="guanyl_kin"/>
    <property type="match status" value="1"/>
</dbReference>
<dbReference type="PANTHER" id="PTHR23117:SF13">
    <property type="entry name" value="GUANYLATE KINASE"/>
    <property type="match status" value="1"/>
</dbReference>
<dbReference type="PANTHER" id="PTHR23117">
    <property type="entry name" value="GUANYLATE KINASE-RELATED"/>
    <property type="match status" value="1"/>
</dbReference>
<dbReference type="Pfam" id="PF00625">
    <property type="entry name" value="Guanylate_kin"/>
    <property type="match status" value="1"/>
</dbReference>
<dbReference type="SMART" id="SM00072">
    <property type="entry name" value="GuKc"/>
    <property type="match status" value="1"/>
</dbReference>
<dbReference type="SUPFAM" id="SSF52540">
    <property type="entry name" value="P-loop containing nucleoside triphosphate hydrolases"/>
    <property type="match status" value="1"/>
</dbReference>
<dbReference type="PROSITE" id="PS00856">
    <property type="entry name" value="GUANYLATE_KINASE_1"/>
    <property type="match status" value="1"/>
</dbReference>
<dbReference type="PROSITE" id="PS50052">
    <property type="entry name" value="GUANYLATE_KINASE_2"/>
    <property type="match status" value="1"/>
</dbReference>
<organism>
    <name type="scientific">Streptococcus pyogenes serotype M6 (strain ATCC BAA-946 / MGAS10394)</name>
    <dbReference type="NCBI Taxonomy" id="286636"/>
    <lineage>
        <taxon>Bacteria</taxon>
        <taxon>Bacillati</taxon>
        <taxon>Bacillota</taxon>
        <taxon>Bacilli</taxon>
        <taxon>Lactobacillales</taxon>
        <taxon>Streptococcaceae</taxon>
        <taxon>Streptococcus</taxon>
    </lineage>
</organism>
<feature type="chain" id="PRO_0000170622" description="Guanylate kinase">
    <location>
        <begin position="1"/>
        <end position="211"/>
    </location>
</feature>
<feature type="domain" description="Guanylate kinase-like" evidence="1">
    <location>
        <begin position="5"/>
        <end position="184"/>
    </location>
</feature>
<feature type="binding site" evidence="1">
    <location>
        <begin position="12"/>
        <end position="19"/>
    </location>
    <ligand>
        <name>ATP</name>
        <dbReference type="ChEBI" id="CHEBI:30616"/>
    </ligand>
</feature>
<comment type="function">
    <text evidence="1">Essential for recycling GMP and indirectly, cGMP.</text>
</comment>
<comment type="catalytic activity">
    <reaction evidence="1">
        <text>GMP + ATP = GDP + ADP</text>
        <dbReference type="Rhea" id="RHEA:20780"/>
        <dbReference type="ChEBI" id="CHEBI:30616"/>
        <dbReference type="ChEBI" id="CHEBI:58115"/>
        <dbReference type="ChEBI" id="CHEBI:58189"/>
        <dbReference type="ChEBI" id="CHEBI:456216"/>
        <dbReference type="EC" id="2.7.4.8"/>
    </reaction>
</comment>
<comment type="subcellular location">
    <subcellularLocation>
        <location evidence="1">Cytoplasm</location>
    </subcellularLocation>
</comment>
<comment type="similarity">
    <text evidence="1">Belongs to the guanylate kinase family.</text>
</comment>
<accession>Q5XAP1</accession>
<keyword id="KW-0067">ATP-binding</keyword>
<keyword id="KW-0963">Cytoplasm</keyword>
<keyword id="KW-0418">Kinase</keyword>
<keyword id="KW-0547">Nucleotide-binding</keyword>
<keyword id="KW-0808">Transferase</keyword>
<reference key="1">
    <citation type="journal article" date="2004" name="J. Infect. Dis.">
        <title>Progress toward characterization of the group A Streptococcus metagenome: complete genome sequence of a macrolide-resistant serotype M6 strain.</title>
        <authorList>
            <person name="Banks D.J."/>
            <person name="Porcella S.F."/>
            <person name="Barbian K.D."/>
            <person name="Beres S.B."/>
            <person name="Philips L.E."/>
            <person name="Voyich J.M."/>
            <person name="DeLeo F.R."/>
            <person name="Martin J.M."/>
            <person name="Somerville G.A."/>
            <person name="Musser J.M."/>
        </authorList>
    </citation>
    <scope>NUCLEOTIDE SEQUENCE [LARGE SCALE GENOMIC DNA]</scope>
    <source>
        <strain>ATCC BAA-946 / MGAS10394</strain>
    </source>
</reference>
<name>KGUA_STRP6</name>
<gene>
    <name evidence="1" type="primary">gmk</name>
    <name type="ordered locus">M6_Spy1387</name>
</gene>
<proteinExistence type="inferred from homology"/>
<protein>
    <recommendedName>
        <fullName evidence="1">Guanylate kinase</fullName>
        <ecNumber evidence="1">2.7.4.8</ecNumber>
    </recommendedName>
    <alternativeName>
        <fullName evidence="1">GMP kinase</fullName>
    </alternativeName>
</protein>
<sequence length="211" mass="24186">MSERGLLIVFSGPSGVGKGTVRQEIFSTPDHKFEYSVSMTTRPQRPGEVDGVDYFFRTREEFEELIKTGQMLEYAEYVGNYYGTPLTYVNETLDKGIDVFLEIEVQGALQVKSKVPDGVFVFLTPPDLDELEDRLVGRGTDSQEVIAQRIERAKEEIALMREYDYAVVNDEVALAAERVKRIIETEHFRVERVIGRYDKMIKITKNPFKAK</sequence>